<gene>
    <name evidence="1" type="primary">queC</name>
    <name type="ordered locus">YPO3150</name>
    <name type="ordered locus">y1034</name>
    <name type="ordered locus">YP_0781</name>
</gene>
<dbReference type="EC" id="6.3.4.20" evidence="1"/>
<dbReference type="EMBL" id="AL590842">
    <property type="protein sequence ID" value="CAL21745.1"/>
    <property type="molecule type" value="Genomic_DNA"/>
</dbReference>
<dbReference type="EMBL" id="AE017042">
    <property type="protein sequence ID" value="AAS61046.1"/>
    <property type="molecule type" value="Genomic_DNA"/>
</dbReference>
<dbReference type="EMBL" id="AE009952">
    <property type="protein sequence ID" value="AAM84615.1"/>
    <property type="molecule type" value="Genomic_DNA"/>
</dbReference>
<dbReference type="PIR" id="AF0382">
    <property type="entry name" value="AF0382"/>
</dbReference>
<dbReference type="RefSeq" id="WP_002208635.1">
    <property type="nucleotide sequence ID" value="NZ_WUCM01000043.1"/>
</dbReference>
<dbReference type="RefSeq" id="YP_002348055.1">
    <property type="nucleotide sequence ID" value="NC_003143.1"/>
</dbReference>
<dbReference type="SMR" id="Q8ZC72"/>
<dbReference type="STRING" id="214092.YPO3150"/>
<dbReference type="PaxDb" id="214092-YPO3150"/>
<dbReference type="DNASU" id="1145981"/>
<dbReference type="EnsemblBacteria" id="AAS61046">
    <property type="protein sequence ID" value="AAS61046"/>
    <property type="gene ID" value="YP_0781"/>
</dbReference>
<dbReference type="GeneID" id="57975561"/>
<dbReference type="KEGG" id="ype:YPO3150"/>
<dbReference type="KEGG" id="ypk:y1034"/>
<dbReference type="KEGG" id="ypm:YP_0781"/>
<dbReference type="PATRIC" id="fig|214092.21.peg.3607"/>
<dbReference type="eggNOG" id="COG0603">
    <property type="taxonomic scope" value="Bacteria"/>
</dbReference>
<dbReference type="HOGENOM" id="CLU_081854_0_0_6"/>
<dbReference type="OMA" id="VWVPNRN"/>
<dbReference type="OrthoDB" id="9789567at2"/>
<dbReference type="UniPathway" id="UPA00391"/>
<dbReference type="Proteomes" id="UP000000815">
    <property type="component" value="Chromosome"/>
</dbReference>
<dbReference type="Proteomes" id="UP000001019">
    <property type="component" value="Chromosome"/>
</dbReference>
<dbReference type="Proteomes" id="UP000002490">
    <property type="component" value="Chromosome"/>
</dbReference>
<dbReference type="GO" id="GO:0005524">
    <property type="term" value="F:ATP binding"/>
    <property type="evidence" value="ECO:0007669"/>
    <property type="project" value="UniProtKB-UniRule"/>
</dbReference>
<dbReference type="GO" id="GO:0016879">
    <property type="term" value="F:ligase activity, forming carbon-nitrogen bonds"/>
    <property type="evidence" value="ECO:0007669"/>
    <property type="project" value="UniProtKB-UniRule"/>
</dbReference>
<dbReference type="GO" id="GO:0008270">
    <property type="term" value="F:zinc ion binding"/>
    <property type="evidence" value="ECO:0007669"/>
    <property type="project" value="UniProtKB-UniRule"/>
</dbReference>
<dbReference type="GO" id="GO:0008616">
    <property type="term" value="P:queuosine biosynthetic process"/>
    <property type="evidence" value="ECO:0007669"/>
    <property type="project" value="UniProtKB-UniRule"/>
</dbReference>
<dbReference type="CDD" id="cd01995">
    <property type="entry name" value="QueC-like"/>
    <property type="match status" value="1"/>
</dbReference>
<dbReference type="FunFam" id="3.40.50.620:FF:000017">
    <property type="entry name" value="7-cyano-7-deazaguanine synthase"/>
    <property type="match status" value="1"/>
</dbReference>
<dbReference type="Gene3D" id="3.40.50.620">
    <property type="entry name" value="HUPs"/>
    <property type="match status" value="1"/>
</dbReference>
<dbReference type="HAMAP" id="MF_01633">
    <property type="entry name" value="QueC"/>
    <property type="match status" value="1"/>
</dbReference>
<dbReference type="InterPro" id="IPR018317">
    <property type="entry name" value="QueC"/>
</dbReference>
<dbReference type="InterPro" id="IPR014729">
    <property type="entry name" value="Rossmann-like_a/b/a_fold"/>
</dbReference>
<dbReference type="NCBIfam" id="TIGR00364">
    <property type="entry name" value="7-cyano-7-deazaguanine synthase QueC"/>
    <property type="match status" value="1"/>
</dbReference>
<dbReference type="NCBIfam" id="NF008317">
    <property type="entry name" value="PRK11106.1"/>
    <property type="match status" value="1"/>
</dbReference>
<dbReference type="PANTHER" id="PTHR42914">
    <property type="entry name" value="7-CYANO-7-DEAZAGUANINE SYNTHASE"/>
    <property type="match status" value="1"/>
</dbReference>
<dbReference type="PANTHER" id="PTHR42914:SF1">
    <property type="entry name" value="7-CYANO-7-DEAZAGUANINE SYNTHASE"/>
    <property type="match status" value="1"/>
</dbReference>
<dbReference type="Pfam" id="PF06508">
    <property type="entry name" value="QueC"/>
    <property type="match status" value="1"/>
</dbReference>
<dbReference type="PIRSF" id="PIRSF006293">
    <property type="entry name" value="ExsB"/>
    <property type="match status" value="1"/>
</dbReference>
<dbReference type="SUPFAM" id="SSF52402">
    <property type="entry name" value="Adenine nucleotide alpha hydrolases-like"/>
    <property type="match status" value="1"/>
</dbReference>
<sequence length="232" mass="25472">MKRAVVVFSGGQDSTTCLIQALQQYDEVHCITFDYGQRHRTEIDVARELALQLGATAHKVLDVGMLNELAVSSLTRDSIPVPSYDANADGALPSTFVPGRNILFLTLASIYAYQVQAQAVITGVCETDFSGYPDCRDEFIKALNHAIDLGIGRDIAFITPLMWLDKAETWALADYYQQLDLIRHHTLTCYNGIKGDGCGQCAACHLRAKGLASYMANKQQVILNLKQKVGLA</sequence>
<protein>
    <recommendedName>
        <fullName evidence="1">7-cyano-7-deazaguanine synthase</fullName>
        <ecNumber evidence="1">6.3.4.20</ecNumber>
    </recommendedName>
    <alternativeName>
        <fullName evidence="1">7-cyano-7-carbaguanine synthase</fullName>
    </alternativeName>
    <alternativeName>
        <fullName evidence="1">PreQ(0) synthase</fullName>
    </alternativeName>
    <alternativeName>
        <fullName evidence="1">Queuosine biosynthesis protein QueC</fullName>
    </alternativeName>
</protein>
<proteinExistence type="inferred from homology"/>
<organism>
    <name type="scientific">Yersinia pestis</name>
    <dbReference type="NCBI Taxonomy" id="632"/>
    <lineage>
        <taxon>Bacteria</taxon>
        <taxon>Pseudomonadati</taxon>
        <taxon>Pseudomonadota</taxon>
        <taxon>Gammaproteobacteria</taxon>
        <taxon>Enterobacterales</taxon>
        <taxon>Yersiniaceae</taxon>
        <taxon>Yersinia</taxon>
    </lineage>
</organism>
<comment type="function">
    <text evidence="1">Catalyzes the ATP-dependent conversion of 7-carboxy-7-deazaguanine (CDG) to 7-cyano-7-deazaguanine (preQ(0)).</text>
</comment>
<comment type="catalytic activity">
    <reaction evidence="1">
        <text>7-carboxy-7-deazaguanine + NH4(+) + ATP = 7-cyano-7-deazaguanine + ADP + phosphate + H2O + H(+)</text>
        <dbReference type="Rhea" id="RHEA:27982"/>
        <dbReference type="ChEBI" id="CHEBI:15377"/>
        <dbReference type="ChEBI" id="CHEBI:15378"/>
        <dbReference type="ChEBI" id="CHEBI:28938"/>
        <dbReference type="ChEBI" id="CHEBI:30616"/>
        <dbReference type="ChEBI" id="CHEBI:43474"/>
        <dbReference type="ChEBI" id="CHEBI:45075"/>
        <dbReference type="ChEBI" id="CHEBI:61036"/>
        <dbReference type="ChEBI" id="CHEBI:456216"/>
        <dbReference type="EC" id="6.3.4.20"/>
    </reaction>
</comment>
<comment type="cofactor">
    <cofactor evidence="1">
        <name>Zn(2+)</name>
        <dbReference type="ChEBI" id="CHEBI:29105"/>
    </cofactor>
    <text evidence="1">Binds 1 zinc ion per subunit.</text>
</comment>
<comment type="pathway">
    <text evidence="1">Purine metabolism; 7-cyano-7-deazaguanine biosynthesis.</text>
</comment>
<comment type="similarity">
    <text evidence="1">Belongs to the QueC family.</text>
</comment>
<evidence type="ECO:0000255" key="1">
    <source>
        <dbReference type="HAMAP-Rule" id="MF_01633"/>
    </source>
</evidence>
<feature type="chain" id="PRO_0000246969" description="7-cyano-7-deazaguanine synthase">
    <location>
        <begin position="1"/>
        <end position="232"/>
    </location>
</feature>
<feature type="binding site" evidence="1">
    <location>
        <begin position="8"/>
        <end position="18"/>
    </location>
    <ligand>
        <name>ATP</name>
        <dbReference type="ChEBI" id="CHEBI:30616"/>
    </ligand>
</feature>
<feature type="binding site" evidence="1">
    <location>
        <position position="189"/>
    </location>
    <ligand>
        <name>Zn(2+)</name>
        <dbReference type="ChEBI" id="CHEBI:29105"/>
    </ligand>
</feature>
<feature type="binding site" evidence="1">
    <location>
        <position position="198"/>
    </location>
    <ligand>
        <name>Zn(2+)</name>
        <dbReference type="ChEBI" id="CHEBI:29105"/>
    </ligand>
</feature>
<feature type="binding site" evidence="1">
    <location>
        <position position="201"/>
    </location>
    <ligand>
        <name>Zn(2+)</name>
        <dbReference type="ChEBI" id="CHEBI:29105"/>
    </ligand>
</feature>
<feature type="binding site" evidence="1">
    <location>
        <position position="204"/>
    </location>
    <ligand>
        <name>Zn(2+)</name>
        <dbReference type="ChEBI" id="CHEBI:29105"/>
    </ligand>
</feature>
<name>QUEC_YERPE</name>
<reference key="1">
    <citation type="journal article" date="2001" name="Nature">
        <title>Genome sequence of Yersinia pestis, the causative agent of plague.</title>
        <authorList>
            <person name="Parkhill J."/>
            <person name="Wren B.W."/>
            <person name="Thomson N.R."/>
            <person name="Titball R.W."/>
            <person name="Holden M.T.G."/>
            <person name="Prentice M.B."/>
            <person name="Sebaihia M."/>
            <person name="James K.D."/>
            <person name="Churcher C.M."/>
            <person name="Mungall K.L."/>
            <person name="Baker S."/>
            <person name="Basham D."/>
            <person name="Bentley S.D."/>
            <person name="Brooks K."/>
            <person name="Cerdeno-Tarraga A.-M."/>
            <person name="Chillingworth T."/>
            <person name="Cronin A."/>
            <person name="Davies R.M."/>
            <person name="Davis P."/>
            <person name="Dougan G."/>
            <person name="Feltwell T."/>
            <person name="Hamlin N."/>
            <person name="Holroyd S."/>
            <person name="Jagels K."/>
            <person name="Karlyshev A.V."/>
            <person name="Leather S."/>
            <person name="Moule S."/>
            <person name="Oyston P.C.F."/>
            <person name="Quail M.A."/>
            <person name="Rutherford K.M."/>
            <person name="Simmonds M."/>
            <person name="Skelton J."/>
            <person name="Stevens K."/>
            <person name="Whitehead S."/>
            <person name="Barrell B.G."/>
        </authorList>
    </citation>
    <scope>NUCLEOTIDE SEQUENCE [LARGE SCALE GENOMIC DNA]</scope>
    <source>
        <strain>CO-92 / Biovar Orientalis</strain>
    </source>
</reference>
<reference key="2">
    <citation type="journal article" date="2004" name="DNA Res.">
        <title>Complete genome sequence of Yersinia pestis strain 91001, an isolate avirulent to humans.</title>
        <authorList>
            <person name="Song Y."/>
            <person name="Tong Z."/>
            <person name="Wang J."/>
            <person name="Wang L."/>
            <person name="Guo Z."/>
            <person name="Han Y."/>
            <person name="Zhang J."/>
            <person name="Pei D."/>
            <person name="Zhou D."/>
            <person name="Qin H."/>
            <person name="Pang X."/>
            <person name="Han Y."/>
            <person name="Zhai J."/>
            <person name="Li M."/>
            <person name="Cui B."/>
            <person name="Qi Z."/>
            <person name="Jin L."/>
            <person name="Dai R."/>
            <person name="Chen F."/>
            <person name="Li S."/>
            <person name="Ye C."/>
            <person name="Du Z."/>
            <person name="Lin W."/>
            <person name="Wang J."/>
            <person name="Yu J."/>
            <person name="Yang H."/>
            <person name="Wang J."/>
            <person name="Huang P."/>
            <person name="Yang R."/>
        </authorList>
    </citation>
    <scope>NUCLEOTIDE SEQUENCE [LARGE SCALE GENOMIC DNA]</scope>
    <source>
        <strain>91001 / Biovar Mediaevalis</strain>
    </source>
</reference>
<reference key="3">
    <citation type="journal article" date="2002" name="J. Bacteriol.">
        <title>Genome sequence of Yersinia pestis KIM.</title>
        <authorList>
            <person name="Deng W."/>
            <person name="Burland V."/>
            <person name="Plunkett G. III"/>
            <person name="Boutin A."/>
            <person name="Mayhew G.F."/>
            <person name="Liss P."/>
            <person name="Perna N.T."/>
            <person name="Rose D.J."/>
            <person name="Mau B."/>
            <person name="Zhou S."/>
            <person name="Schwartz D.C."/>
            <person name="Fetherston J.D."/>
            <person name="Lindler L.E."/>
            <person name="Brubaker R.R."/>
            <person name="Plano G.V."/>
            <person name="Straley S.C."/>
            <person name="McDonough K.A."/>
            <person name="Nilles M.L."/>
            <person name="Matson J.S."/>
            <person name="Blattner F.R."/>
            <person name="Perry R.D."/>
        </authorList>
    </citation>
    <scope>NUCLEOTIDE SEQUENCE [LARGE SCALE GENOMIC DNA]</scope>
    <source>
        <strain>KIM10+ / Biovar Mediaevalis</strain>
    </source>
</reference>
<keyword id="KW-0067">ATP-binding</keyword>
<keyword id="KW-0436">Ligase</keyword>
<keyword id="KW-0479">Metal-binding</keyword>
<keyword id="KW-0547">Nucleotide-binding</keyword>
<keyword id="KW-0671">Queuosine biosynthesis</keyword>
<keyword id="KW-1185">Reference proteome</keyword>
<keyword id="KW-0862">Zinc</keyword>
<accession>Q8ZC72</accession>
<accession>Q0WCD3</accession>
<accession>Q74WR4</accession>
<accession>Q7CK27</accession>